<gene>
    <name evidence="1" type="primary">mnmA</name>
    <name type="ordered locus">MGAS10270_Spy1959</name>
</gene>
<comment type="function">
    <text evidence="1">Catalyzes the 2-thiolation of uridine at the wobble position (U34) of tRNA, leading to the formation of s(2)U34.</text>
</comment>
<comment type="catalytic activity">
    <reaction evidence="1">
        <text>S-sulfanyl-L-cysteinyl-[protein] + uridine(34) in tRNA + AH2 + ATP = 2-thiouridine(34) in tRNA + L-cysteinyl-[protein] + A + AMP + diphosphate + H(+)</text>
        <dbReference type="Rhea" id="RHEA:47032"/>
        <dbReference type="Rhea" id="RHEA-COMP:10131"/>
        <dbReference type="Rhea" id="RHEA-COMP:11726"/>
        <dbReference type="Rhea" id="RHEA-COMP:11727"/>
        <dbReference type="Rhea" id="RHEA-COMP:11728"/>
        <dbReference type="ChEBI" id="CHEBI:13193"/>
        <dbReference type="ChEBI" id="CHEBI:15378"/>
        <dbReference type="ChEBI" id="CHEBI:17499"/>
        <dbReference type="ChEBI" id="CHEBI:29950"/>
        <dbReference type="ChEBI" id="CHEBI:30616"/>
        <dbReference type="ChEBI" id="CHEBI:33019"/>
        <dbReference type="ChEBI" id="CHEBI:61963"/>
        <dbReference type="ChEBI" id="CHEBI:65315"/>
        <dbReference type="ChEBI" id="CHEBI:87170"/>
        <dbReference type="ChEBI" id="CHEBI:456215"/>
        <dbReference type="EC" id="2.8.1.13"/>
    </reaction>
</comment>
<comment type="subcellular location">
    <subcellularLocation>
        <location evidence="1">Cytoplasm</location>
    </subcellularLocation>
</comment>
<comment type="similarity">
    <text evidence="1">Belongs to the MnmA/TRMU family.</text>
</comment>
<comment type="sequence caution" evidence="2">
    <conflict type="erroneous initiation">
        <sequence resource="EMBL-CDS" id="ABF35024"/>
    </conflict>
</comment>
<name>MNMA_STRPD</name>
<reference key="1">
    <citation type="journal article" date="2006" name="Proc. Natl. Acad. Sci. U.S.A.">
        <title>Molecular genetic anatomy of inter- and intraserotype variation in the human bacterial pathogen group A Streptococcus.</title>
        <authorList>
            <person name="Beres S.B."/>
            <person name="Richter E.W."/>
            <person name="Nagiec M.J."/>
            <person name="Sumby P."/>
            <person name="Porcella S.F."/>
            <person name="DeLeo F.R."/>
            <person name="Musser J.M."/>
        </authorList>
    </citation>
    <scope>NUCLEOTIDE SEQUENCE [LARGE SCALE GENOMIC DNA]</scope>
    <source>
        <strain>MGAS10270</strain>
    </source>
</reference>
<protein>
    <recommendedName>
        <fullName evidence="1">tRNA-specific 2-thiouridylase MnmA</fullName>
        <ecNumber evidence="1">2.8.1.13</ecNumber>
    </recommendedName>
</protein>
<sequence length="373" mass="41889">MTDNSKIRVVVGMSGGVDSSVTALLLKEQGYDVIGVFMKNWDDTDEFGVCTATEDYKDVAAVADQIGIPYYSVNFEKEYWDRVFEYFLAEYRAGRTPNPDVMCNKEIKFKAFLDYAMTLGADYVATGHYAQVKRDENGTVYMLRGADNGKDQTYFLSQLSQEQLQKTLFPLGHLQKSEVREIAERAGLATAKKKDSTGICFIGEKNFKQFLSQYLPAQKGRMMTIDGRDMGEHAGLMYYTIGQRGGLGIGGQHGGDNQPWFVVGKDLSQNILYVGQGFYHEALMSNSLDASVIHFTREMPEEFTFECTAKFRYRQPDSQVTVHVREDKAEVVFAEPQRAITPGQAVVFYDGKECLGGGMIDMAYKNGQPCQYI</sequence>
<keyword id="KW-0067">ATP-binding</keyword>
<keyword id="KW-0963">Cytoplasm</keyword>
<keyword id="KW-1015">Disulfide bond</keyword>
<keyword id="KW-0547">Nucleotide-binding</keyword>
<keyword id="KW-0694">RNA-binding</keyword>
<keyword id="KW-0808">Transferase</keyword>
<keyword id="KW-0819">tRNA processing</keyword>
<keyword id="KW-0820">tRNA-binding</keyword>
<feature type="chain" id="PRO_0000349813" description="tRNA-specific 2-thiouridylase MnmA">
    <location>
        <begin position="1"/>
        <end position="373"/>
    </location>
</feature>
<feature type="region of interest" description="Interaction with target base in tRNA" evidence="1">
    <location>
        <begin position="98"/>
        <end position="100"/>
    </location>
</feature>
<feature type="region of interest" description="Interaction with tRNA" evidence="1">
    <location>
        <begin position="150"/>
        <end position="152"/>
    </location>
</feature>
<feature type="region of interest" description="Interaction with tRNA" evidence="1">
    <location>
        <begin position="312"/>
        <end position="313"/>
    </location>
</feature>
<feature type="active site" description="Nucleophile" evidence="1">
    <location>
        <position position="103"/>
    </location>
</feature>
<feature type="active site" description="Cysteine persulfide intermediate" evidence="1">
    <location>
        <position position="200"/>
    </location>
</feature>
<feature type="binding site" evidence="1">
    <location>
        <begin position="12"/>
        <end position="19"/>
    </location>
    <ligand>
        <name>ATP</name>
        <dbReference type="ChEBI" id="CHEBI:30616"/>
    </ligand>
</feature>
<feature type="binding site" evidence="1">
    <location>
        <position position="38"/>
    </location>
    <ligand>
        <name>ATP</name>
        <dbReference type="ChEBI" id="CHEBI:30616"/>
    </ligand>
</feature>
<feature type="binding site" evidence="1">
    <location>
        <position position="127"/>
    </location>
    <ligand>
        <name>ATP</name>
        <dbReference type="ChEBI" id="CHEBI:30616"/>
    </ligand>
</feature>
<feature type="site" description="Interaction with tRNA" evidence="1">
    <location>
        <position position="128"/>
    </location>
</feature>
<feature type="site" description="Interaction with tRNA" evidence="1">
    <location>
        <position position="344"/>
    </location>
</feature>
<feature type="disulfide bond" description="Alternate" evidence="1">
    <location>
        <begin position="103"/>
        <end position="200"/>
    </location>
</feature>
<proteinExistence type="inferred from homology"/>
<dbReference type="EC" id="2.8.1.13" evidence="1"/>
<dbReference type="EMBL" id="CP000260">
    <property type="protein sequence ID" value="ABF35024.1"/>
    <property type="status" value="ALT_INIT"/>
    <property type="molecule type" value="Genomic_DNA"/>
</dbReference>
<dbReference type="SMR" id="Q1JED4"/>
<dbReference type="KEGG" id="sph:MGAS10270_Spy1959"/>
<dbReference type="HOGENOM" id="CLU_035188_1_0_9"/>
<dbReference type="Proteomes" id="UP000002436">
    <property type="component" value="Chromosome"/>
</dbReference>
<dbReference type="GO" id="GO:0005737">
    <property type="term" value="C:cytoplasm"/>
    <property type="evidence" value="ECO:0007669"/>
    <property type="project" value="UniProtKB-SubCell"/>
</dbReference>
<dbReference type="GO" id="GO:0005524">
    <property type="term" value="F:ATP binding"/>
    <property type="evidence" value="ECO:0007669"/>
    <property type="project" value="UniProtKB-KW"/>
</dbReference>
<dbReference type="GO" id="GO:0000049">
    <property type="term" value="F:tRNA binding"/>
    <property type="evidence" value="ECO:0007669"/>
    <property type="project" value="UniProtKB-KW"/>
</dbReference>
<dbReference type="GO" id="GO:0103016">
    <property type="term" value="F:tRNA-uridine 2-sulfurtransferase activity"/>
    <property type="evidence" value="ECO:0007669"/>
    <property type="project" value="UniProtKB-EC"/>
</dbReference>
<dbReference type="GO" id="GO:0002143">
    <property type="term" value="P:tRNA wobble position uridine thiolation"/>
    <property type="evidence" value="ECO:0007669"/>
    <property type="project" value="TreeGrafter"/>
</dbReference>
<dbReference type="CDD" id="cd01998">
    <property type="entry name" value="MnmA_TRMU-like"/>
    <property type="match status" value="1"/>
</dbReference>
<dbReference type="FunFam" id="2.30.30.280:FF:000001">
    <property type="entry name" value="tRNA-specific 2-thiouridylase MnmA"/>
    <property type="match status" value="1"/>
</dbReference>
<dbReference type="FunFam" id="2.40.30.10:FF:000023">
    <property type="entry name" value="tRNA-specific 2-thiouridylase MnmA"/>
    <property type="match status" value="1"/>
</dbReference>
<dbReference type="FunFam" id="3.40.50.620:FF:000004">
    <property type="entry name" value="tRNA-specific 2-thiouridylase MnmA"/>
    <property type="match status" value="1"/>
</dbReference>
<dbReference type="Gene3D" id="2.30.30.280">
    <property type="entry name" value="Adenine nucleotide alpha hydrolases-like domains"/>
    <property type="match status" value="1"/>
</dbReference>
<dbReference type="Gene3D" id="3.40.50.620">
    <property type="entry name" value="HUPs"/>
    <property type="match status" value="1"/>
</dbReference>
<dbReference type="Gene3D" id="2.40.30.10">
    <property type="entry name" value="Translation factors"/>
    <property type="match status" value="1"/>
</dbReference>
<dbReference type="HAMAP" id="MF_00144">
    <property type="entry name" value="tRNA_thiouridyl_MnmA"/>
    <property type="match status" value="1"/>
</dbReference>
<dbReference type="InterPro" id="IPR004506">
    <property type="entry name" value="MnmA-like"/>
</dbReference>
<dbReference type="InterPro" id="IPR046885">
    <property type="entry name" value="MnmA-like_C"/>
</dbReference>
<dbReference type="InterPro" id="IPR046884">
    <property type="entry name" value="MnmA-like_central"/>
</dbReference>
<dbReference type="InterPro" id="IPR023382">
    <property type="entry name" value="MnmA-like_central_sf"/>
</dbReference>
<dbReference type="InterPro" id="IPR014729">
    <property type="entry name" value="Rossmann-like_a/b/a_fold"/>
</dbReference>
<dbReference type="NCBIfam" id="NF001138">
    <property type="entry name" value="PRK00143.1"/>
    <property type="match status" value="1"/>
</dbReference>
<dbReference type="NCBIfam" id="TIGR00420">
    <property type="entry name" value="trmU"/>
    <property type="match status" value="1"/>
</dbReference>
<dbReference type="PANTHER" id="PTHR11933:SF5">
    <property type="entry name" value="MITOCHONDRIAL TRNA-SPECIFIC 2-THIOURIDYLASE 1"/>
    <property type="match status" value="1"/>
</dbReference>
<dbReference type="PANTHER" id="PTHR11933">
    <property type="entry name" value="TRNA 5-METHYLAMINOMETHYL-2-THIOURIDYLATE -METHYLTRANSFERASE"/>
    <property type="match status" value="1"/>
</dbReference>
<dbReference type="Pfam" id="PF03054">
    <property type="entry name" value="tRNA_Me_trans"/>
    <property type="match status" value="1"/>
</dbReference>
<dbReference type="Pfam" id="PF20258">
    <property type="entry name" value="tRNA_Me_trans_C"/>
    <property type="match status" value="1"/>
</dbReference>
<dbReference type="Pfam" id="PF20259">
    <property type="entry name" value="tRNA_Me_trans_M"/>
    <property type="match status" value="1"/>
</dbReference>
<dbReference type="SUPFAM" id="SSF52402">
    <property type="entry name" value="Adenine nucleotide alpha hydrolases-like"/>
    <property type="match status" value="1"/>
</dbReference>
<accession>Q1JED4</accession>
<organism>
    <name type="scientific">Streptococcus pyogenes serotype M2 (strain MGAS10270)</name>
    <dbReference type="NCBI Taxonomy" id="370552"/>
    <lineage>
        <taxon>Bacteria</taxon>
        <taxon>Bacillati</taxon>
        <taxon>Bacillota</taxon>
        <taxon>Bacilli</taxon>
        <taxon>Lactobacillales</taxon>
        <taxon>Streptococcaceae</taxon>
        <taxon>Streptococcus</taxon>
    </lineage>
</organism>
<evidence type="ECO:0000255" key="1">
    <source>
        <dbReference type="HAMAP-Rule" id="MF_00144"/>
    </source>
</evidence>
<evidence type="ECO:0000305" key="2"/>